<accession>P63646</accession>
<accession>Q8G1G1</accession>
<accession>Q8YGG0</accession>
<reference key="1">
    <citation type="journal article" date="2002" name="Proc. Natl. Acad. Sci. U.S.A.">
        <title>The genome sequence of the facultative intracellular pathogen Brucella melitensis.</title>
        <authorList>
            <person name="DelVecchio V.G."/>
            <person name="Kapatral V."/>
            <person name="Redkar R.J."/>
            <person name="Patra G."/>
            <person name="Mujer C."/>
            <person name="Los T."/>
            <person name="Ivanova N."/>
            <person name="Anderson I."/>
            <person name="Bhattacharyya A."/>
            <person name="Lykidis A."/>
            <person name="Reznik G."/>
            <person name="Jablonski L."/>
            <person name="Larsen N."/>
            <person name="D'Souza M."/>
            <person name="Bernal A."/>
            <person name="Mazur M."/>
            <person name="Goltsman E."/>
            <person name="Selkov E."/>
            <person name="Elzer P.H."/>
            <person name="Hagius S."/>
            <person name="O'Callaghan D."/>
            <person name="Letesson J.-J."/>
            <person name="Haselkorn R."/>
            <person name="Kyrpides N.C."/>
            <person name="Overbeek R."/>
        </authorList>
    </citation>
    <scope>NUCLEOTIDE SEQUENCE [LARGE SCALE GENOMIC DNA]</scope>
    <source>
        <strain>ATCC 23456 / CCUG 17765 / NCTC 10094 / 16M</strain>
    </source>
</reference>
<proteinExistence type="inferred from homology"/>
<organism>
    <name type="scientific">Brucella melitensis biotype 1 (strain ATCC 23456 / CCUG 17765 / NCTC 10094 / 16M)</name>
    <dbReference type="NCBI Taxonomy" id="224914"/>
    <lineage>
        <taxon>Bacteria</taxon>
        <taxon>Pseudomonadati</taxon>
        <taxon>Pseudomonadota</taxon>
        <taxon>Alphaproteobacteria</taxon>
        <taxon>Hyphomicrobiales</taxon>
        <taxon>Brucellaceae</taxon>
        <taxon>Brucella/Ochrobactrum group</taxon>
        <taxon>Brucella</taxon>
    </lineage>
</organism>
<dbReference type="EC" id="2.3.2.29" evidence="1"/>
<dbReference type="EMBL" id="AE008917">
    <property type="protein sequence ID" value="AAL52380.1"/>
    <property type="molecule type" value="Genomic_DNA"/>
</dbReference>
<dbReference type="PIR" id="AI3401">
    <property type="entry name" value="AI3401"/>
</dbReference>
<dbReference type="RefSeq" id="WP_004683553.1">
    <property type="nucleotide sequence ID" value="NZ_GG703778.1"/>
</dbReference>
<dbReference type="SMR" id="P63646"/>
<dbReference type="KEGG" id="bme:BMEI1199"/>
<dbReference type="KEGG" id="bmel:DK63_211"/>
<dbReference type="PATRIC" id="fig|224914.52.peg.218"/>
<dbReference type="eggNOG" id="COG2935">
    <property type="taxonomic scope" value="Bacteria"/>
</dbReference>
<dbReference type="Proteomes" id="UP000000419">
    <property type="component" value="Chromosome I"/>
</dbReference>
<dbReference type="GO" id="GO:0005737">
    <property type="term" value="C:cytoplasm"/>
    <property type="evidence" value="ECO:0007669"/>
    <property type="project" value="UniProtKB-SubCell"/>
</dbReference>
<dbReference type="GO" id="GO:0004057">
    <property type="term" value="F:arginyl-tRNA--protein transferase activity"/>
    <property type="evidence" value="ECO:0007669"/>
    <property type="project" value="InterPro"/>
</dbReference>
<dbReference type="GO" id="GO:0008914">
    <property type="term" value="F:leucyl-tRNA--protein transferase activity"/>
    <property type="evidence" value="ECO:0007669"/>
    <property type="project" value="UniProtKB-UniRule"/>
</dbReference>
<dbReference type="GO" id="GO:0071596">
    <property type="term" value="P:ubiquitin-dependent protein catabolic process via the N-end rule pathway"/>
    <property type="evidence" value="ECO:0007669"/>
    <property type="project" value="InterPro"/>
</dbReference>
<dbReference type="HAMAP" id="MF_00689">
    <property type="entry name" value="Bpt"/>
    <property type="match status" value="1"/>
</dbReference>
<dbReference type="InterPro" id="IPR016181">
    <property type="entry name" value="Acyl_CoA_acyltransferase"/>
</dbReference>
<dbReference type="InterPro" id="IPR017138">
    <property type="entry name" value="Asp_Glu_LeuTrfase"/>
</dbReference>
<dbReference type="InterPro" id="IPR030700">
    <property type="entry name" value="N-end_Aminoacyl_Trfase"/>
</dbReference>
<dbReference type="InterPro" id="IPR007472">
    <property type="entry name" value="N-end_Aminoacyl_Trfase_C"/>
</dbReference>
<dbReference type="InterPro" id="IPR007471">
    <property type="entry name" value="N-end_Aminoacyl_Trfase_N"/>
</dbReference>
<dbReference type="NCBIfam" id="NF002341">
    <property type="entry name" value="PRK01305.1-1"/>
    <property type="match status" value="1"/>
</dbReference>
<dbReference type="NCBIfam" id="NF002343">
    <property type="entry name" value="PRK01305.1-4"/>
    <property type="match status" value="1"/>
</dbReference>
<dbReference type="NCBIfam" id="NF002346">
    <property type="entry name" value="PRK01305.2-3"/>
    <property type="match status" value="1"/>
</dbReference>
<dbReference type="PANTHER" id="PTHR21367">
    <property type="entry name" value="ARGININE-TRNA-PROTEIN TRANSFERASE 1"/>
    <property type="match status" value="1"/>
</dbReference>
<dbReference type="PANTHER" id="PTHR21367:SF1">
    <property type="entry name" value="ARGINYL-TRNA--PROTEIN TRANSFERASE 1"/>
    <property type="match status" value="1"/>
</dbReference>
<dbReference type="Pfam" id="PF04377">
    <property type="entry name" value="ATE_C"/>
    <property type="match status" value="1"/>
</dbReference>
<dbReference type="Pfam" id="PF04376">
    <property type="entry name" value="ATE_N"/>
    <property type="match status" value="1"/>
</dbReference>
<dbReference type="PIRSF" id="PIRSF037208">
    <property type="entry name" value="ATE_pro_prd"/>
    <property type="match status" value="1"/>
</dbReference>
<dbReference type="SUPFAM" id="SSF55729">
    <property type="entry name" value="Acyl-CoA N-acyltransferases (Nat)"/>
    <property type="match status" value="1"/>
</dbReference>
<sequence>MTHQPQQSPQFFLTAPSPCPYLEGQQERKVFTHLVGDKANEINDLLTQGGFRRSQNIAYRPACEVCRACISVRILAGEFEMTRNMRRVWSQNRDLIGRVHKAQPSTEQYALFRDYLDARHRSGGMSDMTVLDYAMMIEDTHVNTQIIEYRRRGPDSFMSAKGDGELIAVALTDVMADGLSMVYSFFSPHMQERSLGTYMILDHIERARAAGLPHVYLGYWVEGSRKMQYKIRFTPQEHLGPRGWQRFEG</sequence>
<protein>
    <recommendedName>
        <fullName evidence="1">Aspartate/glutamate leucyltransferase</fullName>
        <ecNumber evidence="1">2.3.2.29</ecNumber>
    </recommendedName>
</protein>
<name>BPT_BRUME</name>
<evidence type="ECO:0000255" key="1">
    <source>
        <dbReference type="HAMAP-Rule" id="MF_00689"/>
    </source>
</evidence>
<comment type="function">
    <text evidence="1">Functions in the N-end rule pathway of protein degradation where it conjugates Leu from its aminoacyl-tRNA to the N-termini of proteins containing an N-terminal aspartate or glutamate.</text>
</comment>
<comment type="catalytic activity">
    <reaction evidence="1">
        <text>N-terminal L-glutamyl-[protein] + L-leucyl-tRNA(Leu) = N-terminal L-leucyl-L-glutamyl-[protein] + tRNA(Leu) + H(+)</text>
        <dbReference type="Rhea" id="RHEA:50412"/>
        <dbReference type="Rhea" id="RHEA-COMP:9613"/>
        <dbReference type="Rhea" id="RHEA-COMP:9622"/>
        <dbReference type="Rhea" id="RHEA-COMP:12664"/>
        <dbReference type="Rhea" id="RHEA-COMP:12668"/>
        <dbReference type="ChEBI" id="CHEBI:15378"/>
        <dbReference type="ChEBI" id="CHEBI:64721"/>
        <dbReference type="ChEBI" id="CHEBI:78442"/>
        <dbReference type="ChEBI" id="CHEBI:78494"/>
        <dbReference type="ChEBI" id="CHEBI:133041"/>
        <dbReference type="EC" id="2.3.2.29"/>
    </reaction>
</comment>
<comment type="catalytic activity">
    <reaction evidence="1">
        <text>N-terminal L-aspartyl-[protein] + L-leucyl-tRNA(Leu) = N-terminal L-leucyl-L-aspartyl-[protein] + tRNA(Leu) + H(+)</text>
        <dbReference type="Rhea" id="RHEA:50420"/>
        <dbReference type="Rhea" id="RHEA-COMP:9613"/>
        <dbReference type="Rhea" id="RHEA-COMP:9622"/>
        <dbReference type="Rhea" id="RHEA-COMP:12669"/>
        <dbReference type="Rhea" id="RHEA-COMP:12674"/>
        <dbReference type="ChEBI" id="CHEBI:15378"/>
        <dbReference type="ChEBI" id="CHEBI:64720"/>
        <dbReference type="ChEBI" id="CHEBI:78442"/>
        <dbReference type="ChEBI" id="CHEBI:78494"/>
        <dbReference type="ChEBI" id="CHEBI:133042"/>
        <dbReference type="EC" id="2.3.2.29"/>
    </reaction>
</comment>
<comment type="subcellular location">
    <subcellularLocation>
        <location evidence="1">Cytoplasm</location>
    </subcellularLocation>
</comment>
<comment type="similarity">
    <text evidence="1">Belongs to the R-transferase family. Bpt subfamily.</text>
</comment>
<keyword id="KW-0012">Acyltransferase</keyword>
<keyword id="KW-0963">Cytoplasm</keyword>
<keyword id="KW-0808">Transferase</keyword>
<gene>
    <name evidence="1" type="primary">bpt</name>
    <name type="ordered locus">BMEI1199</name>
</gene>
<feature type="chain" id="PRO_0000195099" description="Aspartate/glutamate leucyltransferase">
    <location>
        <begin position="1"/>
        <end position="249"/>
    </location>
</feature>